<evidence type="ECO:0000255" key="1">
    <source>
        <dbReference type="HAMAP-Rule" id="MF_00294"/>
    </source>
</evidence>
<evidence type="ECO:0000305" key="2"/>
<comment type="subcellular location">
    <subcellularLocation>
        <location>Plastid</location>
        <location>Chloroplast</location>
    </subcellularLocation>
</comment>
<comment type="similarity">
    <text evidence="1">Belongs to the bacterial ribosomal protein bL33 family.</text>
</comment>
<name>RK33_AETCO</name>
<organism>
    <name type="scientific">Aethionema cordifolium</name>
    <name type="common">Lebanon stonecress</name>
    <dbReference type="NCBI Taxonomy" id="434059"/>
    <lineage>
        <taxon>Eukaryota</taxon>
        <taxon>Viridiplantae</taxon>
        <taxon>Streptophyta</taxon>
        <taxon>Embryophyta</taxon>
        <taxon>Tracheophyta</taxon>
        <taxon>Spermatophyta</taxon>
        <taxon>Magnoliopsida</taxon>
        <taxon>eudicotyledons</taxon>
        <taxon>Gunneridae</taxon>
        <taxon>Pentapetalae</taxon>
        <taxon>rosids</taxon>
        <taxon>malvids</taxon>
        <taxon>Brassicales</taxon>
        <taxon>Brassicaceae</taxon>
        <taxon>Aethionemeae</taxon>
        <taxon>Aethionema</taxon>
    </lineage>
</organism>
<accession>A4QJD6</accession>
<gene>
    <name evidence="1" type="primary">rpl33</name>
</gene>
<keyword id="KW-0150">Chloroplast</keyword>
<keyword id="KW-0934">Plastid</keyword>
<keyword id="KW-0687">Ribonucleoprotein</keyword>
<keyword id="KW-0689">Ribosomal protein</keyword>
<sequence>MAKGKDVRVTIFLECTSCVRNDIKKEFAGISRYITQKNRHNTPSRLELRKFCPYCYKHTIHGEIKK</sequence>
<proteinExistence type="inferred from homology"/>
<protein>
    <recommendedName>
        <fullName evidence="1">Large ribosomal subunit protein bL33c</fullName>
    </recommendedName>
    <alternativeName>
        <fullName evidence="2">50S ribosomal protein L33, chloroplastic</fullName>
    </alternativeName>
</protein>
<reference key="1">
    <citation type="submission" date="2007-03" db="EMBL/GenBank/DDBJ databases">
        <title>Sequencing analysis of Aethionema coridifolium chloroplast DNA.</title>
        <authorList>
            <person name="Hosouchi T."/>
            <person name="Tsuruoka H."/>
            <person name="Kotani H."/>
        </authorList>
    </citation>
    <scope>NUCLEOTIDE SEQUENCE [LARGE SCALE GENOMIC DNA]</scope>
</reference>
<feature type="chain" id="PRO_0000356780" description="Large ribosomal subunit protein bL33c">
    <location>
        <begin position="1"/>
        <end position="66"/>
    </location>
</feature>
<dbReference type="EMBL" id="AP009366">
    <property type="protein sequence ID" value="BAF49791.1"/>
    <property type="molecule type" value="Genomic_DNA"/>
</dbReference>
<dbReference type="RefSeq" id="YP_001122967.1">
    <property type="nucleotide sequence ID" value="NC_009265.1"/>
</dbReference>
<dbReference type="GeneID" id="4968629"/>
<dbReference type="GO" id="GO:0009507">
    <property type="term" value="C:chloroplast"/>
    <property type="evidence" value="ECO:0007669"/>
    <property type="project" value="UniProtKB-SubCell"/>
</dbReference>
<dbReference type="GO" id="GO:1990904">
    <property type="term" value="C:ribonucleoprotein complex"/>
    <property type="evidence" value="ECO:0007669"/>
    <property type="project" value="UniProtKB-KW"/>
</dbReference>
<dbReference type="GO" id="GO:0005840">
    <property type="term" value="C:ribosome"/>
    <property type="evidence" value="ECO:0007669"/>
    <property type="project" value="UniProtKB-KW"/>
</dbReference>
<dbReference type="GO" id="GO:0003735">
    <property type="term" value="F:structural constituent of ribosome"/>
    <property type="evidence" value="ECO:0007669"/>
    <property type="project" value="InterPro"/>
</dbReference>
<dbReference type="GO" id="GO:0006412">
    <property type="term" value="P:translation"/>
    <property type="evidence" value="ECO:0007669"/>
    <property type="project" value="UniProtKB-UniRule"/>
</dbReference>
<dbReference type="FunFam" id="2.20.28.120:FF:000004">
    <property type="entry name" value="50S ribosomal protein L33, chloroplastic"/>
    <property type="match status" value="1"/>
</dbReference>
<dbReference type="Gene3D" id="2.20.28.120">
    <property type="entry name" value="Ribosomal protein L33"/>
    <property type="match status" value="1"/>
</dbReference>
<dbReference type="HAMAP" id="MF_00294">
    <property type="entry name" value="Ribosomal_bL33"/>
    <property type="match status" value="1"/>
</dbReference>
<dbReference type="InterPro" id="IPR001705">
    <property type="entry name" value="Ribosomal_bL33"/>
</dbReference>
<dbReference type="InterPro" id="IPR018264">
    <property type="entry name" value="Ribosomal_bL33_CS"/>
</dbReference>
<dbReference type="InterPro" id="IPR038584">
    <property type="entry name" value="Ribosomal_bL33_sf"/>
</dbReference>
<dbReference type="InterPro" id="IPR011332">
    <property type="entry name" value="Ribosomal_zn-bd"/>
</dbReference>
<dbReference type="NCBIfam" id="NF001764">
    <property type="entry name" value="PRK00504.1"/>
    <property type="match status" value="1"/>
</dbReference>
<dbReference type="NCBIfam" id="NF001860">
    <property type="entry name" value="PRK00595.1"/>
    <property type="match status" value="1"/>
</dbReference>
<dbReference type="NCBIfam" id="TIGR01023">
    <property type="entry name" value="rpmG_bact"/>
    <property type="match status" value="1"/>
</dbReference>
<dbReference type="PANTHER" id="PTHR43168">
    <property type="entry name" value="50S RIBOSOMAL PROTEIN L33, CHLOROPLASTIC"/>
    <property type="match status" value="1"/>
</dbReference>
<dbReference type="PANTHER" id="PTHR43168:SF2">
    <property type="entry name" value="LARGE RIBOSOMAL SUBUNIT PROTEIN BL33C"/>
    <property type="match status" value="1"/>
</dbReference>
<dbReference type="Pfam" id="PF00471">
    <property type="entry name" value="Ribosomal_L33"/>
    <property type="match status" value="1"/>
</dbReference>
<dbReference type="SUPFAM" id="SSF57829">
    <property type="entry name" value="Zn-binding ribosomal proteins"/>
    <property type="match status" value="1"/>
</dbReference>
<dbReference type="PROSITE" id="PS00582">
    <property type="entry name" value="RIBOSOMAL_L33"/>
    <property type="match status" value="1"/>
</dbReference>
<geneLocation type="chloroplast"/>